<name>DPM2_BOVIN</name>
<accession>Q2KIN1</accession>
<keyword id="KW-0256">Endoplasmic reticulum</keyword>
<keyword id="KW-0472">Membrane</keyword>
<keyword id="KW-1185">Reference proteome</keyword>
<keyword id="KW-0812">Transmembrane</keyword>
<keyword id="KW-1133">Transmembrane helix</keyword>
<feature type="chain" id="PRO_0000240350" description="Dolichol phosphate-mannose biosynthesis regulatory protein">
    <location>
        <begin position="1"/>
        <end position="84"/>
    </location>
</feature>
<feature type="transmembrane region" description="Helical" evidence="3">
    <location>
        <begin position="11"/>
        <end position="31"/>
    </location>
</feature>
<feature type="transmembrane region" description="Helical" evidence="3">
    <location>
        <begin position="49"/>
        <end position="69"/>
    </location>
</feature>
<evidence type="ECO:0000250" key="1"/>
<evidence type="ECO:0000250" key="2">
    <source>
        <dbReference type="UniProtKB" id="O94777"/>
    </source>
</evidence>
<evidence type="ECO:0000255" key="3"/>
<evidence type="ECO:0000305" key="4"/>
<protein>
    <recommendedName>
        <fullName evidence="2">Dolichol phosphate-mannose biosynthesis regulatory protein</fullName>
    </recommendedName>
    <alternativeName>
        <fullName>Dolichol-phosphate mannose synthase subunit 2</fullName>
        <shortName>DPM synthase subunit 2</shortName>
    </alternativeName>
</protein>
<reference key="1">
    <citation type="submission" date="2006-01" db="EMBL/GenBank/DDBJ databases">
        <authorList>
            <consortium name="NIH - Mammalian Gene Collection (MGC) project"/>
        </authorList>
    </citation>
    <scope>NUCLEOTIDE SEQUENCE [LARGE SCALE MRNA]</scope>
    <source>
        <strain>Hereford</strain>
        <tissue>Testis</tissue>
    </source>
</reference>
<proteinExistence type="inferred from homology"/>
<dbReference type="EMBL" id="BC112577">
    <property type="protein sequence ID" value="AAI12578.1"/>
    <property type="molecule type" value="mRNA"/>
</dbReference>
<dbReference type="RefSeq" id="NP_001039733.1">
    <property type="nucleotide sequence ID" value="NM_001046268.2"/>
</dbReference>
<dbReference type="SMR" id="Q2KIN1"/>
<dbReference type="FunCoup" id="Q2KIN1">
    <property type="interactions" value="2388"/>
</dbReference>
<dbReference type="STRING" id="9913.ENSBTAP00000004393"/>
<dbReference type="PaxDb" id="9913-ENSBTAP00000004393"/>
<dbReference type="GeneID" id="523737"/>
<dbReference type="KEGG" id="bta:523737"/>
<dbReference type="CTD" id="8818"/>
<dbReference type="eggNOG" id="KOG3488">
    <property type="taxonomic scope" value="Eukaryota"/>
</dbReference>
<dbReference type="InParanoid" id="Q2KIN1"/>
<dbReference type="OrthoDB" id="311279at2759"/>
<dbReference type="UniPathway" id="UPA00378"/>
<dbReference type="Proteomes" id="UP000009136">
    <property type="component" value="Unplaced"/>
</dbReference>
<dbReference type="GO" id="GO:0033185">
    <property type="term" value="C:dolichol-phosphate-mannose synthase complex"/>
    <property type="evidence" value="ECO:0000318"/>
    <property type="project" value="GO_Central"/>
</dbReference>
<dbReference type="GO" id="GO:0000506">
    <property type="term" value="C:glycosylphosphatidylinositol-N-acetylglucosaminyltransferase (GPI-GnT) complex"/>
    <property type="evidence" value="ECO:0000250"/>
    <property type="project" value="UniProtKB"/>
</dbReference>
<dbReference type="GO" id="GO:0030234">
    <property type="term" value="F:enzyme regulator activity"/>
    <property type="evidence" value="ECO:0000318"/>
    <property type="project" value="GO_Central"/>
</dbReference>
<dbReference type="GO" id="GO:0180047">
    <property type="term" value="P:dolichol phosphate mannose biosynthetic process"/>
    <property type="evidence" value="ECO:0007669"/>
    <property type="project" value="InterPro"/>
</dbReference>
<dbReference type="GO" id="GO:0006506">
    <property type="term" value="P:GPI anchor biosynthetic process"/>
    <property type="evidence" value="ECO:0000250"/>
    <property type="project" value="UniProtKB"/>
</dbReference>
<dbReference type="GO" id="GO:0006486">
    <property type="term" value="P:protein glycosylation"/>
    <property type="evidence" value="ECO:0007669"/>
    <property type="project" value="UniProtKB-UniPathway"/>
</dbReference>
<dbReference type="InterPro" id="IPR009914">
    <property type="entry name" value="DPM2"/>
</dbReference>
<dbReference type="PANTHER" id="PTHR15039">
    <property type="entry name" value="DOLICHOL PHOSPHATE-MANNOSE BIOSYNTHESIS REGULATORY PROTEIN"/>
    <property type="match status" value="1"/>
</dbReference>
<dbReference type="PANTHER" id="PTHR15039:SF11">
    <property type="entry name" value="DOLICHOL PHOSPHATE-MANNOSE BIOSYNTHESIS REGULATORY PROTEIN"/>
    <property type="match status" value="1"/>
</dbReference>
<dbReference type="Pfam" id="PF07297">
    <property type="entry name" value="DPM2"/>
    <property type="match status" value="1"/>
</dbReference>
<gene>
    <name evidence="2" type="primary">DPM2</name>
</gene>
<sequence length="84" mass="9395">MATGTDQVVGLGLVALSLIIFTYYTAWVILLPFIDSQHVIHKYFLPRAYAIAIPLAAGHLLLLFVGIFITYVMLKNQNDTKKTQ</sequence>
<organism>
    <name type="scientific">Bos taurus</name>
    <name type="common">Bovine</name>
    <dbReference type="NCBI Taxonomy" id="9913"/>
    <lineage>
        <taxon>Eukaryota</taxon>
        <taxon>Metazoa</taxon>
        <taxon>Chordata</taxon>
        <taxon>Craniata</taxon>
        <taxon>Vertebrata</taxon>
        <taxon>Euteleostomi</taxon>
        <taxon>Mammalia</taxon>
        <taxon>Eutheria</taxon>
        <taxon>Laurasiatheria</taxon>
        <taxon>Artiodactyla</taxon>
        <taxon>Ruminantia</taxon>
        <taxon>Pecora</taxon>
        <taxon>Bovidae</taxon>
        <taxon>Bovinae</taxon>
        <taxon>Bos</taxon>
    </lineage>
</organism>
<comment type="function">
    <text evidence="2">Regulates the biosynthesis of dolichol phosphate-mannose. Regulatory subunit of the dolichol-phosphate mannose (DPM) synthase complex; essential for the ER localization and stable expression of DPM1. Part of the glycosylphosphatidylinositol-N-acetylglucosaminyltransferase (GPI-GnT) complex that catalyzes the transfer of N-acetylglucosamine from UDP-N-acetylglucosamine to phosphatidylinositol and participates in the first step of GPI biosynthesis. May act by regulating the GPI-GNT complex.</text>
</comment>
<comment type="pathway">
    <text evidence="2">Protein modification; protein glycosylation.</text>
</comment>
<comment type="subunit">
    <text evidence="2">Component of the dolichol-phosphate mannose (DPM) synthase complex composed of DPM1, DPM2 and DPM3; in the complex interacts directly with DPM3. Component of the glycosylphosphatidylinositol-N-acetylglucosaminyltransferase (GPI-GnT) complex composed at least by PIGA, PIGC, PIGH, PIGP, PIGQ, PIGY and DPM2. Interacts with PIGA, PIGC and PIGQ.</text>
</comment>
<comment type="subcellular location">
    <subcellularLocation>
        <location evidence="1">Endoplasmic reticulum membrane</location>
        <topology evidence="1">Multi-pass membrane protein</topology>
    </subcellularLocation>
</comment>
<comment type="similarity">
    <text evidence="4">Belongs to the DPM2 family.</text>
</comment>